<accession>Q1CVG4</accession>
<dbReference type="EC" id="3.6.-.-" evidence="1"/>
<dbReference type="EMBL" id="CP000113">
    <property type="protein sequence ID" value="ABF89543.1"/>
    <property type="molecule type" value="Genomic_DNA"/>
</dbReference>
<dbReference type="RefSeq" id="WP_011557408.1">
    <property type="nucleotide sequence ID" value="NC_008095.1"/>
</dbReference>
<dbReference type="SMR" id="Q1CVG4"/>
<dbReference type="STRING" id="246197.MXAN_7506"/>
<dbReference type="EnsemblBacteria" id="ABF89543">
    <property type="protein sequence ID" value="ABF89543"/>
    <property type="gene ID" value="MXAN_7506"/>
</dbReference>
<dbReference type="GeneID" id="41364639"/>
<dbReference type="KEGG" id="mxa:MXAN_7506"/>
<dbReference type="eggNOG" id="COG0486">
    <property type="taxonomic scope" value="Bacteria"/>
</dbReference>
<dbReference type="HOGENOM" id="CLU_019624_4_1_7"/>
<dbReference type="OrthoDB" id="9805918at2"/>
<dbReference type="Proteomes" id="UP000002402">
    <property type="component" value="Chromosome"/>
</dbReference>
<dbReference type="GO" id="GO:0005829">
    <property type="term" value="C:cytosol"/>
    <property type="evidence" value="ECO:0007669"/>
    <property type="project" value="TreeGrafter"/>
</dbReference>
<dbReference type="GO" id="GO:0005525">
    <property type="term" value="F:GTP binding"/>
    <property type="evidence" value="ECO:0007669"/>
    <property type="project" value="UniProtKB-UniRule"/>
</dbReference>
<dbReference type="GO" id="GO:0003924">
    <property type="term" value="F:GTPase activity"/>
    <property type="evidence" value="ECO:0007669"/>
    <property type="project" value="UniProtKB-UniRule"/>
</dbReference>
<dbReference type="GO" id="GO:0046872">
    <property type="term" value="F:metal ion binding"/>
    <property type="evidence" value="ECO:0007669"/>
    <property type="project" value="UniProtKB-KW"/>
</dbReference>
<dbReference type="GO" id="GO:0030488">
    <property type="term" value="P:tRNA methylation"/>
    <property type="evidence" value="ECO:0007669"/>
    <property type="project" value="TreeGrafter"/>
</dbReference>
<dbReference type="GO" id="GO:0002098">
    <property type="term" value="P:tRNA wobble uridine modification"/>
    <property type="evidence" value="ECO:0007669"/>
    <property type="project" value="TreeGrafter"/>
</dbReference>
<dbReference type="CDD" id="cd04164">
    <property type="entry name" value="trmE"/>
    <property type="match status" value="1"/>
</dbReference>
<dbReference type="CDD" id="cd14858">
    <property type="entry name" value="TrmE_N"/>
    <property type="match status" value="1"/>
</dbReference>
<dbReference type="Gene3D" id="3.40.50.300">
    <property type="entry name" value="P-loop containing nucleotide triphosphate hydrolases"/>
    <property type="match status" value="1"/>
</dbReference>
<dbReference type="Gene3D" id="3.30.1360.120">
    <property type="entry name" value="Probable tRNA modification gtpase trme, domain 1"/>
    <property type="match status" value="1"/>
</dbReference>
<dbReference type="Gene3D" id="1.20.120.430">
    <property type="entry name" value="tRNA modification GTPase MnmE domain 2"/>
    <property type="match status" value="1"/>
</dbReference>
<dbReference type="HAMAP" id="MF_00379">
    <property type="entry name" value="GTPase_MnmE"/>
    <property type="match status" value="1"/>
</dbReference>
<dbReference type="InterPro" id="IPR031168">
    <property type="entry name" value="G_TrmE"/>
</dbReference>
<dbReference type="InterPro" id="IPR006073">
    <property type="entry name" value="GTP-bd"/>
</dbReference>
<dbReference type="InterPro" id="IPR018948">
    <property type="entry name" value="GTP-bd_TrmE_N"/>
</dbReference>
<dbReference type="InterPro" id="IPR004520">
    <property type="entry name" value="GTPase_MnmE"/>
</dbReference>
<dbReference type="InterPro" id="IPR027368">
    <property type="entry name" value="MnmE_dom2"/>
</dbReference>
<dbReference type="InterPro" id="IPR025867">
    <property type="entry name" value="MnmE_helical"/>
</dbReference>
<dbReference type="InterPro" id="IPR027417">
    <property type="entry name" value="P-loop_NTPase"/>
</dbReference>
<dbReference type="InterPro" id="IPR005225">
    <property type="entry name" value="Small_GTP-bd"/>
</dbReference>
<dbReference type="InterPro" id="IPR027266">
    <property type="entry name" value="TrmE/GcvT_dom1"/>
</dbReference>
<dbReference type="NCBIfam" id="TIGR00450">
    <property type="entry name" value="mnmE_trmE_thdF"/>
    <property type="match status" value="1"/>
</dbReference>
<dbReference type="NCBIfam" id="TIGR00231">
    <property type="entry name" value="small_GTP"/>
    <property type="match status" value="1"/>
</dbReference>
<dbReference type="PANTHER" id="PTHR42714">
    <property type="entry name" value="TRNA MODIFICATION GTPASE GTPBP3"/>
    <property type="match status" value="1"/>
</dbReference>
<dbReference type="PANTHER" id="PTHR42714:SF2">
    <property type="entry name" value="TRNA MODIFICATION GTPASE GTPBP3, MITOCHONDRIAL"/>
    <property type="match status" value="1"/>
</dbReference>
<dbReference type="Pfam" id="PF01926">
    <property type="entry name" value="MMR_HSR1"/>
    <property type="match status" value="1"/>
</dbReference>
<dbReference type="Pfam" id="PF12631">
    <property type="entry name" value="MnmE_helical"/>
    <property type="match status" value="1"/>
</dbReference>
<dbReference type="Pfam" id="PF10396">
    <property type="entry name" value="TrmE_N"/>
    <property type="match status" value="1"/>
</dbReference>
<dbReference type="SUPFAM" id="SSF52540">
    <property type="entry name" value="P-loop containing nucleoside triphosphate hydrolases"/>
    <property type="match status" value="1"/>
</dbReference>
<dbReference type="PROSITE" id="PS51709">
    <property type="entry name" value="G_TRME"/>
    <property type="match status" value="1"/>
</dbReference>
<protein>
    <recommendedName>
        <fullName evidence="1">tRNA modification GTPase MnmE</fullName>
        <ecNumber evidence="1">3.6.-.-</ecNumber>
    </recommendedName>
</protein>
<gene>
    <name evidence="1" type="primary">mnmE</name>
    <name evidence="1" type="synonym">trmE</name>
    <name type="ordered locus">MXAN_7506</name>
</gene>
<keyword id="KW-0963">Cytoplasm</keyword>
<keyword id="KW-0342">GTP-binding</keyword>
<keyword id="KW-0378">Hydrolase</keyword>
<keyword id="KW-0460">Magnesium</keyword>
<keyword id="KW-0479">Metal-binding</keyword>
<keyword id="KW-0547">Nucleotide-binding</keyword>
<keyword id="KW-0630">Potassium</keyword>
<keyword id="KW-1185">Reference proteome</keyword>
<keyword id="KW-0819">tRNA processing</keyword>
<comment type="function">
    <text evidence="1">Exhibits a very high intrinsic GTPase hydrolysis rate. Involved in the addition of a carboxymethylaminomethyl (cmnm) group at the wobble position (U34) of certain tRNAs, forming tRNA-cmnm(5)s(2)U34.</text>
</comment>
<comment type="cofactor">
    <cofactor evidence="1">
        <name>K(+)</name>
        <dbReference type="ChEBI" id="CHEBI:29103"/>
    </cofactor>
    <text evidence="1">Binds 1 potassium ion per subunit.</text>
</comment>
<comment type="subunit">
    <text evidence="1">Homodimer. Heterotetramer of two MnmE and two MnmG subunits.</text>
</comment>
<comment type="subcellular location">
    <subcellularLocation>
        <location evidence="1">Cytoplasm</location>
    </subcellularLocation>
</comment>
<comment type="similarity">
    <text evidence="1">Belongs to the TRAFAC class TrmE-Era-EngA-EngB-Septin-like GTPase superfamily. TrmE GTPase family.</text>
</comment>
<name>MNME_MYXXD</name>
<evidence type="ECO:0000255" key="1">
    <source>
        <dbReference type="HAMAP-Rule" id="MF_00379"/>
    </source>
</evidence>
<sequence>MTSSSMTIAALATAPAAGAVGILRLSGPEALDVGRLLAPGVPAQPTPRHAYLASFVDAEGRSLDEGLFLYFRGPQSFTGEDVVELQAHGSPRLLRLLLTRALEDARVRHAAPGEFTRRAFLNGRLDLTRAEAVADLVAADSEAAVRAAAAGLSGALASRVQALEEPLRALHADMEGVLSFPDEAEGADEDVGERVTALRAQAETLLAEVGRGRLVRRGARVALFGPVNAGKSTLFNRLVGEARALVDDEPGTTRDALEARVEWDGLAVTLFDTAGLRETPGRVEALGIARTRALLTGVDLAVLVLPPGVTQAEVEAWTRDVGGTPVLVVDGKCDVAEVSSSPRQRVSGLTGEGVDALRDDMLGRLWGGGTPSAVALVSERHADALRRASEALGRAESASRVSTLEVVSGEVGLALEALGEVSGTVVSEALLDAIFQRFCIGK</sequence>
<reference key="1">
    <citation type="journal article" date="2006" name="Proc. Natl. Acad. Sci. U.S.A.">
        <title>Evolution of sensory complexity recorded in a myxobacterial genome.</title>
        <authorList>
            <person name="Goldman B.S."/>
            <person name="Nierman W.C."/>
            <person name="Kaiser D."/>
            <person name="Slater S.C."/>
            <person name="Durkin A.S."/>
            <person name="Eisen J.A."/>
            <person name="Ronning C.M."/>
            <person name="Barbazuk W.B."/>
            <person name="Blanchard M."/>
            <person name="Field C."/>
            <person name="Halling C."/>
            <person name="Hinkle G."/>
            <person name="Iartchuk O."/>
            <person name="Kim H.S."/>
            <person name="Mackenzie C."/>
            <person name="Madupu R."/>
            <person name="Miller N."/>
            <person name="Shvartsbeyn A."/>
            <person name="Sullivan S.A."/>
            <person name="Vaudin M."/>
            <person name="Wiegand R."/>
            <person name="Kaplan H.B."/>
        </authorList>
    </citation>
    <scope>NUCLEOTIDE SEQUENCE [LARGE SCALE GENOMIC DNA]</scope>
    <source>
        <strain>DK1622</strain>
    </source>
</reference>
<feature type="chain" id="PRO_0000345846" description="tRNA modification GTPase MnmE">
    <location>
        <begin position="1"/>
        <end position="442"/>
    </location>
</feature>
<feature type="domain" description="TrmE-type G">
    <location>
        <begin position="218"/>
        <end position="366"/>
    </location>
</feature>
<feature type="binding site" evidence="1">
    <location>
        <position position="24"/>
    </location>
    <ligand>
        <name>(6S)-5-formyl-5,6,7,8-tetrahydrofolate</name>
        <dbReference type="ChEBI" id="CHEBI:57457"/>
    </ligand>
</feature>
<feature type="binding site" evidence="1">
    <location>
        <position position="84"/>
    </location>
    <ligand>
        <name>(6S)-5-formyl-5,6,7,8-tetrahydrofolate</name>
        <dbReference type="ChEBI" id="CHEBI:57457"/>
    </ligand>
</feature>
<feature type="binding site" evidence="1">
    <location>
        <position position="124"/>
    </location>
    <ligand>
        <name>(6S)-5-formyl-5,6,7,8-tetrahydrofolate</name>
        <dbReference type="ChEBI" id="CHEBI:57457"/>
    </ligand>
</feature>
<feature type="binding site" evidence="1">
    <location>
        <begin position="228"/>
        <end position="233"/>
    </location>
    <ligand>
        <name>GTP</name>
        <dbReference type="ChEBI" id="CHEBI:37565"/>
    </ligand>
</feature>
<feature type="binding site" evidence="1">
    <location>
        <position position="232"/>
    </location>
    <ligand>
        <name>Mg(2+)</name>
        <dbReference type="ChEBI" id="CHEBI:18420"/>
    </ligand>
</feature>
<feature type="binding site" evidence="1">
    <location>
        <begin position="247"/>
        <end position="253"/>
    </location>
    <ligand>
        <name>GTP</name>
        <dbReference type="ChEBI" id="CHEBI:37565"/>
    </ligand>
</feature>
<feature type="binding site" evidence="1">
    <location>
        <position position="253"/>
    </location>
    <ligand>
        <name>Mg(2+)</name>
        <dbReference type="ChEBI" id="CHEBI:18420"/>
    </ligand>
</feature>
<feature type="binding site" evidence="1">
    <location>
        <begin position="272"/>
        <end position="275"/>
    </location>
    <ligand>
        <name>GTP</name>
        <dbReference type="ChEBI" id="CHEBI:37565"/>
    </ligand>
</feature>
<feature type="binding site" evidence="1">
    <location>
        <position position="442"/>
    </location>
    <ligand>
        <name>(6S)-5-formyl-5,6,7,8-tetrahydrofolate</name>
        <dbReference type="ChEBI" id="CHEBI:57457"/>
    </ligand>
</feature>
<organism>
    <name type="scientific">Myxococcus xanthus (strain DK1622)</name>
    <dbReference type="NCBI Taxonomy" id="246197"/>
    <lineage>
        <taxon>Bacteria</taxon>
        <taxon>Pseudomonadati</taxon>
        <taxon>Myxococcota</taxon>
        <taxon>Myxococcia</taxon>
        <taxon>Myxococcales</taxon>
        <taxon>Cystobacterineae</taxon>
        <taxon>Myxococcaceae</taxon>
        <taxon>Myxococcus</taxon>
    </lineage>
</organism>
<proteinExistence type="inferred from homology"/>